<dbReference type="EC" id="3.5.1.105" evidence="1"/>
<dbReference type="EMBL" id="CP001127">
    <property type="protein sequence ID" value="ACF90652.1"/>
    <property type="molecule type" value="Genomic_DNA"/>
</dbReference>
<dbReference type="RefSeq" id="WP_000442743.1">
    <property type="nucleotide sequence ID" value="NC_011094.1"/>
</dbReference>
<dbReference type="SMR" id="B4TUD7"/>
<dbReference type="KEGG" id="sew:SeSA_A1414"/>
<dbReference type="HOGENOM" id="CLU_064244_4_1_6"/>
<dbReference type="UniPathway" id="UPA00349"/>
<dbReference type="Proteomes" id="UP000001865">
    <property type="component" value="Chromosome"/>
</dbReference>
<dbReference type="GO" id="GO:0005737">
    <property type="term" value="C:cytoplasm"/>
    <property type="evidence" value="ECO:0007669"/>
    <property type="project" value="UniProtKB-SubCell"/>
</dbReference>
<dbReference type="GO" id="GO:0036311">
    <property type="term" value="F:chitin disaccharide deacetylase activity"/>
    <property type="evidence" value="ECO:0007669"/>
    <property type="project" value="UniProtKB-UniRule"/>
</dbReference>
<dbReference type="GO" id="GO:0019213">
    <property type="term" value="F:deacetylase activity"/>
    <property type="evidence" value="ECO:0007669"/>
    <property type="project" value="TreeGrafter"/>
</dbReference>
<dbReference type="GO" id="GO:0046872">
    <property type="term" value="F:metal ion binding"/>
    <property type="evidence" value="ECO:0007669"/>
    <property type="project" value="UniProtKB-KW"/>
</dbReference>
<dbReference type="GO" id="GO:0006032">
    <property type="term" value="P:chitin catabolic process"/>
    <property type="evidence" value="ECO:0007669"/>
    <property type="project" value="UniProtKB-UniPathway"/>
</dbReference>
<dbReference type="GO" id="GO:0052777">
    <property type="term" value="P:diacetylchitobiose catabolic process"/>
    <property type="evidence" value="ECO:0007669"/>
    <property type="project" value="UniProtKB-UniRule"/>
</dbReference>
<dbReference type="GO" id="GO:0000272">
    <property type="term" value="P:polysaccharide catabolic process"/>
    <property type="evidence" value="ECO:0007669"/>
    <property type="project" value="UniProtKB-UniRule"/>
</dbReference>
<dbReference type="CDD" id="cd10803">
    <property type="entry name" value="YdjC_EF3048_like"/>
    <property type="match status" value="1"/>
</dbReference>
<dbReference type="FunFam" id="3.20.20.370:FF:000001">
    <property type="entry name" value="Chitooligosaccharide deacetylase"/>
    <property type="match status" value="1"/>
</dbReference>
<dbReference type="Gene3D" id="3.20.20.370">
    <property type="entry name" value="Glycoside hydrolase/deacetylase"/>
    <property type="match status" value="1"/>
</dbReference>
<dbReference type="HAMAP" id="MF_01246">
    <property type="entry name" value="COD"/>
    <property type="match status" value="1"/>
</dbReference>
<dbReference type="InterPro" id="IPR022948">
    <property type="entry name" value="COD_ChbG_bac"/>
</dbReference>
<dbReference type="InterPro" id="IPR011330">
    <property type="entry name" value="Glyco_hydro/deAcase_b/a-brl"/>
</dbReference>
<dbReference type="InterPro" id="IPR006879">
    <property type="entry name" value="YdjC-like"/>
</dbReference>
<dbReference type="NCBIfam" id="NF002559">
    <property type="entry name" value="PRK02134.1"/>
    <property type="match status" value="1"/>
</dbReference>
<dbReference type="PANTHER" id="PTHR31609:SF1">
    <property type="entry name" value="CARBOHYDRATE DEACETYLASE"/>
    <property type="match status" value="1"/>
</dbReference>
<dbReference type="PANTHER" id="PTHR31609">
    <property type="entry name" value="YDJC DEACETYLASE FAMILY MEMBER"/>
    <property type="match status" value="1"/>
</dbReference>
<dbReference type="Pfam" id="PF04794">
    <property type="entry name" value="YdjC"/>
    <property type="match status" value="1"/>
</dbReference>
<dbReference type="SUPFAM" id="SSF88713">
    <property type="entry name" value="Glycoside hydrolase/deacetylase"/>
    <property type="match status" value="1"/>
</dbReference>
<accession>B4TUD7</accession>
<reference key="1">
    <citation type="journal article" date="2011" name="J. Bacteriol.">
        <title>Comparative genomics of 28 Salmonella enterica isolates: evidence for CRISPR-mediated adaptive sublineage evolution.</title>
        <authorList>
            <person name="Fricke W.F."/>
            <person name="Mammel M.K."/>
            <person name="McDermott P.F."/>
            <person name="Tartera C."/>
            <person name="White D.G."/>
            <person name="Leclerc J.E."/>
            <person name="Ravel J."/>
            <person name="Cebula T.A."/>
        </authorList>
    </citation>
    <scope>NUCLEOTIDE SEQUENCE [LARGE SCALE GENOMIC DNA]</scope>
    <source>
        <strain>CVM19633</strain>
    </source>
</reference>
<sequence>MERVLIVNADDFGLSKGQNYGIVEAYRNGVVTSTTALVNGEAIGHAAQLSRELPALGVGMHFVLTLGKPVSEMPGLTRDGLLGKWIWQMAEEDTLPLDEIAHELACQYQRFIDVFGREPTHLDSHHHVHMFPQIFPIVARFAAQRGIALRIDRQTVLNADDLPSDLRSTQGFSSEFYGEEITEACFLRILDASAHRGEASLEVMCHPAFVDNIIRQSAYCYPRLTELEVLTSASLKAAIAERGYRPGSFLDI</sequence>
<evidence type="ECO:0000255" key="1">
    <source>
        <dbReference type="HAMAP-Rule" id="MF_01246"/>
    </source>
</evidence>
<comment type="function">
    <text evidence="1">Involved in the degradation of chitin. ChbG is essential for growth on the acetylated chitooligosaccharides chitobiose and chitotriose but is dispensable for growth on cellobiose and chitosan dimer, the deacetylated form of chitobiose. Deacetylation of chitobiose-6-P and chitotriose-6-P is necessary for both the activation of the chb promoter by the regulatory protein ChbR and the hydrolysis of phosphorylated beta-glucosides by the phospho-beta-glucosidase ChbF. Catalyzes the removal of only one acetyl group from chitobiose-6-P to yield monoacetylchitobiose-6-P, the inducer of ChbR and the substrate of ChbF.</text>
</comment>
<comment type="catalytic activity">
    <reaction evidence="1">
        <text>N,N'-diacetylchitobiose + H2O = N-acetyl-beta-D-glucosaminyl-(1-&gt;4)-D-glucosamine + acetate</text>
        <dbReference type="Rhea" id="RHEA:27469"/>
        <dbReference type="ChEBI" id="CHEBI:15377"/>
        <dbReference type="ChEBI" id="CHEBI:28681"/>
        <dbReference type="ChEBI" id="CHEBI:30089"/>
        <dbReference type="ChEBI" id="CHEBI:59910"/>
        <dbReference type="EC" id="3.5.1.105"/>
    </reaction>
</comment>
<comment type="catalytic activity">
    <reaction evidence="1">
        <text>diacetylchitobiose-6'-phosphate + H2O = N'-monoacetylchitobiose-6'-phosphate + acetate</text>
        <dbReference type="Rhea" id="RHEA:35083"/>
        <dbReference type="ChEBI" id="CHEBI:15377"/>
        <dbReference type="ChEBI" id="CHEBI:30089"/>
        <dbReference type="ChEBI" id="CHEBI:64883"/>
        <dbReference type="ChEBI" id="CHEBI:71315"/>
    </reaction>
</comment>
<comment type="cofactor">
    <cofactor evidence="1">
        <name>Mg(2+)</name>
        <dbReference type="ChEBI" id="CHEBI:18420"/>
    </cofactor>
</comment>
<comment type="pathway">
    <text evidence="1">Glycan degradation; chitin degradation.</text>
</comment>
<comment type="subunit">
    <text evidence="1">Homodimer.</text>
</comment>
<comment type="subcellular location">
    <subcellularLocation>
        <location evidence="1">Cytoplasm</location>
    </subcellularLocation>
</comment>
<comment type="similarity">
    <text evidence="1">Belongs to the YdjC deacetylase family. ChbG subfamily.</text>
</comment>
<gene>
    <name evidence="1" type="primary">chbG</name>
    <name type="ordered locus">SeSA_A1414</name>
</gene>
<organism>
    <name type="scientific">Salmonella schwarzengrund (strain CVM19633)</name>
    <dbReference type="NCBI Taxonomy" id="439843"/>
    <lineage>
        <taxon>Bacteria</taxon>
        <taxon>Pseudomonadati</taxon>
        <taxon>Pseudomonadota</taxon>
        <taxon>Gammaproteobacteria</taxon>
        <taxon>Enterobacterales</taxon>
        <taxon>Enterobacteriaceae</taxon>
        <taxon>Salmonella</taxon>
    </lineage>
</organism>
<feature type="chain" id="PRO_1000139837" description="Chitooligosaccharide deacetylase">
    <location>
        <begin position="1"/>
        <end position="252"/>
    </location>
</feature>
<feature type="binding site" evidence="1">
    <location>
        <position position="61"/>
    </location>
    <ligand>
        <name>Mg(2+)</name>
        <dbReference type="ChEBI" id="CHEBI:18420"/>
    </ligand>
</feature>
<feature type="binding site" evidence="1">
    <location>
        <position position="125"/>
    </location>
    <ligand>
        <name>Mg(2+)</name>
        <dbReference type="ChEBI" id="CHEBI:18420"/>
    </ligand>
</feature>
<proteinExistence type="inferred from homology"/>
<name>CHBG_SALSV</name>
<protein>
    <recommendedName>
        <fullName evidence="1">Chitooligosaccharide deacetylase</fullName>
        <shortName evidence="1">COD</shortName>
        <ecNumber evidence="1">3.5.1.105</ecNumber>
    </recommendedName>
    <alternativeName>
        <fullName evidence="1">Chitin disaccharide deacetylase</fullName>
    </alternativeName>
    <alternativeName>
        <fullName evidence="1">Chitobiose deacetylase</fullName>
    </alternativeName>
    <alternativeName>
        <fullName evidence="1">Chitobiose-6P deacetylase</fullName>
    </alternativeName>
    <alternativeName>
        <fullName evidence="1">Chitotriose deacetylase</fullName>
    </alternativeName>
    <alternativeName>
        <fullName evidence="1">Chitotriose-6P deacetylase</fullName>
    </alternativeName>
</protein>
<keyword id="KW-0119">Carbohydrate metabolism</keyword>
<keyword id="KW-0146">Chitin degradation</keyword>
<keyword id="KW-0963">Cytoplasm</keyword>
<keyword id="KW-0378">Hydrolase</keyword>
<keyword id="KW-0460">Magnesium</keyword>
<keyword id="KW-0479">Metal-binding</keyword>
<keyword id="KW-0624">Polysaccharide degradation</keyword>